<protein>
    <recommendedName>
        <fullName evidence="1">Large ribosomal subunit protein uL16c</fullName>
    </recommendedName>
    <alternativeName>
        <fullName evidence="2">50S ribosomal protein L16, chloroplastic</fullName>
    </alternativeName>
</protein>
<comment type="subunit">
    <text evidence="1">Part of the 50S ribosomal subunit.</text>
</comment>
<comment type="subcellular location">
    <subcellularLocation>
        <location>Plastid</location>
        <location>Chloroplast</location>
    </subcellularLocation>
</comment>
<comment type="similarity">
    <text evidence="1">Belongs to the universal ribosomal protein uL16 family.</text>
</comment>
<gene>
    <name evidence="1" type="primary">rpl16</name>
</gene>
<evidence type="ECO:0000255" key="1">
    <source>
        <dbReference type="HAMAP-Rule" id="MF_01342"/>
    </source>
</evidence>
<evidence type="ECO:0000305" key="2"/>
<keyword id="KW-0150">Chloroplast</keyword>
<keyword id="KW-0934">Plastid</keyword>
<keyword id="KW-0687">Ribonucleoprotein</keyword>
<keyword id="KW-0689">Ribosomal protein</keyword>
<name>RK16_OENGL</name>
<geneLocation type="chloroplast"/>
<feature type="chain" id="PRO_0000354652" description="Large ribosomal subunit protein uL16c">
    <location>
        <begin position="1"/>
        <end position="135"/>
    </location>
</feature>
<organism>
    <name type="scientific">Oenothera glazioviana</name>
    <name type="common">Large-flowered evening primrose</name>
    <name type="synonym">Oenothera erythrosepala</name>
    <dbReference type="NCBI Taxonomy" id="482428"/>
    <lineage>
        <taxon>Eukaryota</taxon>
        <taxon>Viridiplantae</taxon>
        <taxon>Streptophyta</taxon>
        <taxon>Embryophyta</taxon>
        <taxon>Tracheophyta</taxon>
        <taxon>Spermatophyta</taxon>
        <taxon>Magnoliopsida</taxon>
        <taxon>eudicotyledons</taxon>
        <taxon>Gunneridae</taxon>
        <taxon>Pentapetalae</taxon>
        <taxon>rosids</taxon>
        <taxon>malvids</taxon>
        <taxon>Myrtales</taxon>
        <taxon>Onagraceae</taxon>
        <taxon>Onagroideae</taxon>
        <taxon>Onagreae</taxon>
        <taxon>Oenothera</taxon>
    </lineage>
</organism>
<proteinExistence type="inferred from homology"/>
<dbReference type="EMBL" id="EU262890">
    <property type="protein sequence ID" value="ABX10074.1"/>
    <property type="molecule type" value="Genomic_DNA"/>
</dbReference>
<dbReference type="RefSeq" id="YP_001687320.1">
    <property type="nucleotide sequence ID" value="NC_010360.2"/>
</dbReference>
<dbReference type="SMR" id="B0Z581"/>
<dbReference type="GeneID" id="5955262"/>
<dbReference type="GO" id="GO:0009507">
    <property type="term" value="C:chloroplast"/>
    <property type="evidence" value="ECO:0007669"/>
    <property type="project" value="UniProtKB-SubCell"/>
</dbReference>
<dbReference type="GO" id="GO:0005762">
    <property type="term" value="C:mitochondrial large ribosomal subunit"/>
    <property type="evidence" value="ECO:0007669"/>
    <property type="project" value="TreeGrafter"/>
</dbReference>
<dbReference type="GO" id="GO:0019843">
    <property type="term" value="F:rRNA binding"/>
    <property type="evidence" value="ECO:0007669"/>
    <property type="project" value="InterPro"/>
</dbReference>
<dbReference type="GO" id="GO:0003735">
    <property type="term" value="F:structural constituent of ribosome"/>
    <property type="evidence" value="ECO:0007669"/>
    <property type="project" value="InterPro"/>
</dbReference>
<dbReference type="GO" id="GO:0032543">
    <property type="term" value="P:mitochondrial translation"/>
    <property type="evidence" value="ECO:0007669"/>
    <property type="project" value="TreeGrafter"/>
</dbReference>
<dbReference type="CDD" id="cd01433">
    <property type="entry name" value="Ribosomal_L16_L10e"/>
    <property type="match status" value="1"/>
</dbReference>
<dbReference type="FunFam" id="3.90.1170.10:FF:000001">
    <property type="entry name" value="50S ribosomal protein L16"/>
    <property type="match status" value="1"/>
</dbReference>
<dbReference type="Gene3D" id="3.90.1170.10">
    <property type="entry name" value="Ribosomal protein L10e/L16"/>
    <property type="match status" value="1"/>
</dbReference>
<dbReference type="HAMAP" id="MF_01342">
    <property type="entry name" value="Ribosomal_uL16"/>
    <property type="match status" value="1"/>
</dbReference>
<dbReference type="InterPro" id="IPR047873">
    <property type="entry name" value="Ribosomal_uL16"/>
</dbReference>
<dbReference type="InterPro" id="IPR000114">
    <property type="entry name" value="Ribosomal_uL16_bact-type"/>
</dbReference>
<dbReference type="InterPro" id="IPR020798">
    <property type="entry name" value="Ribosomal_uL16_CS"/>
</dbReference>
<dbReference type="InterPro" id="IPR016180">
    <property type="entry name" value="Ribosomal_uL16_dom"/>
</dbReference>
<dbReference type="InterPro" id="IPR036920">
    <property type="entry name" value="Ribosomal_uL16_sf"/>
</dbReference>
<dbReference type="NCBIfam" id="TIGR01164">
    <property type="entry name" value="rplP_bact"/>
    <property type="match status" value="1"/>
</dbReference>
<dbReference type="PANTHER" id="PTHR12220">
    <property type="entry name" value="50S/60S RIBOSOMAL PROTEIN L16"/>
    <property type="match status" value="1"/>
</dbReference>
<dbReference type="PANTHER" id="PTHR12220:SF13">
    <property type="entry name" value="LARGE RIBOSOMAL SUBUNIT PROTEIN UL16M"/>
    <property type="match status" value="1"/>
</dbReference>
<dbReference type="Pfam" id="PF00252">
    <property type="entry name" value="Ribosomal_L16"/>
    <property type="match status" value="1"/>
</dbReference>
<dbReference type="PRINTS" id="PR00060">
    <property type="entry name" value="RIBOSOMALL16"/>
</dbReference>
<dbReference type="SUPFAM" id="SSF54686">
    <property type="entry name" value="Ribosomal protein L16p/L10e"/>
    <property type="match status" value="1"/>
</dbReference>
<dbReference type="PROSITE" id="PS00701">
    <property type="entry name" value="RIBOSOMAL_L16_2"/>
    <property type="match status" value="1"/>
</dbReference>
<reference key="1">
    <citation type="journal article" date="2008" name="Nucleic Acids Res.">
        <title>The complete nucleotide sequences of the five genetically distinct plastid genomes of Oenothera, subsection Oenothera: I. Sequence evaluation and plastome evolution.</title>
        <authorList>
            <person name="Greiner S."/>
            <person name="Wang X."/>
            <person name="Rauwolf U."/>
            <person name="Silber M.V."/>
            <person name="Mayer K."/>
            <person name="Meurer J."/>
            <person name="Haberer G."/>
            <person name="Herrmann R.G."/>
        </authorList>
    </citation>
    <scope>NUCLEOTIDE SEQUENCE [LARGE SCALE GENOMIC DNA]</scope>
    <source>
        <strain>cv. Rr-lamarckiana Sweden</strain>
    </source>
</reference>
<sequence>MLSPKRTRFRKQHRGRMRGISYRGNRICFGKYALQALEPAWITSRQIEAGRRAMTRNVRRGGKTWVRIFPDKPVTLRAAETRMGSGKGNPEYWVAVVKPGRILYEMGGVAENIARKAISIAASKMPIRTQFIISG</sequence>
<accession>B0Z581</accession>